<evidence type="ECO:0000305" key="1"/>
<evidence type="ECO:0007829" key="2">
    <source>
        <dbReference type="PDB" id="1X10"/>
    </source>
</evidence>
<evidence type="ECO:0007829" key="3">
    <source>
        <dbReference type="PDB" id="2EO8"/>
    </source>
</evidence>
<name>PCP_PYRFU</name>
<dbReference type="EC" id="3.4.19.3"/>
<dbReference type="EMBL" id="AB015291">
    <property type="protein sequence ID" value="BAA32989.1"/>
    <property type="molecule type" value="Genomic_DNA"/>
</dbReference>
<dbReference type="EMBL" id="AE009950">
    <property type="protein sequence ID" value="AAL81423.1"/>
    <property type="molecule type" value="Genomic_DNA"/>
</dbReference>
<dbReference type="PIR" id="JE0314">
    <property type="entry name" value="JE0314"/>
</dbReference>
<dbReference type="RefSeq" id="WP_011012443.1">
    <property type="nucleotide sequence ID" value="NZ_CP023154.1"/>
</dbReference>
<dbReference type="PDB" id="1IOF">
    <property type="method" value="X-ray"/>
    <property type="resolution" value="2.20 A"/>
    <property type="chains" value="A/B/C/D=1-208"/>
</dbReference>
<dbReference type="PDB" id="1IOI">
    <property type="method" value="X-ray"/>
    <property type="resolution" value="2.70 A"/>
    <property type="chains" value="A/B/C/D=1-208"/>
</dbReference>
<dbReference type="PDB" id="1X10">
    <property type="method" value="X-ray"/>
    <property type="resolution" value="2.00 A"/>
    <property type="chains" value="A/B/C/D=1-208"/>
</dbReference>
<dbReference type="PDB" id="1X12">
    <property type="method" value="X-ray"/>
    <property type="resolution" value="2.00 A"/>
    <property type="chains" value="A/B/C/D=1-208"/>
</dbReference>
<dbReference type="PDB" id="1Z8T">
    <property type="method" value="X-ray"/>
    <property type="resolution" value="2.50 A"/>
    <property type="chains" value="A/B/C/D=1-208"/>
</dbReference>
<dbReference type="PDB" id="1Z8W">
    <property type="method" value="X-ray"/>
    <property type="resolution" value="2.00 A"/>
    <property type="chains" value="A/B/C/D=1-208"/>
</dbReference>
<dbReference type="PDB" id="1Z8X">
    <property type="method" value="X-ray"/>
    <property type="resolution" value="2.00 A"/>
    <property type="chains" value="A/B/C/D=1-208"/>
</dbReference>
<dbReference type="PDB" id="2DF5">
    <property type="method" value="X-ray"/>
    <property type="resolution" value="2.30 A"/>
    <property type="chains" value="A/B/C/D=1-204"/>
</dbReference>
<dbReference type="PDB" id="2EO8">
    <property type="method" value="X-ray"/>
    <property type="resolution" value="2.30 A"/>
    <property type="chains" value="A/B/C/D=1-208"/>
</dbReference>
<dbReference type="PDBsum" id="1IOF"/>
<dbReference type="PDBsum" id="1IOI"/>
<dbReference type="PDBsum" id="1X10"/>
<dbReference type="PDBsum" id="1X12"/>
<dbReference type="PDBsum" id="1Z8T"/>
<dbReference type="PDBsum" id="1Z8W"/>
<dbReference type="PDBsum" id="1Z8X"/>
<dbReference type="PDBsum" id="2DF5"/>
<dbReference type="PDBsum" id="2EO8"/>
<dbReference type="BMRB" id="O73944"/>
<dbReference type="SMR" id="O73944"/>
<dbReference type="STRING" id="186497.PF1299"/>
<dbReference type="MEROPS" id="C15.001"/>
<dbReference type="PaxDb" id="186497-PF1299"/>
<dbReference type="KEGG" id="pfu:PF1299"/>
<dbReference type="PATRIC" id="fig|186497.12.peg.1362"/>
<dbReference type="eggNOG" id="arCOG05850">
    <property type="taxonomic scope" value="Archaea"/>
</dbReference>
<dbReference type="HOGENOM" id="CLU_043960_4_0_2"/>
<dbReference type="OrthoDB" id="39672at2157"/>
<dbReference type="PhylomeDB" id="O73944"/>
<dbReference type="BRENDA" id="3.4.19.3">
    <property type="organism ID" value="5243"/>
</dbReference>
<dbReference type="EvolutionaryTrace" id="O73944"/>
<dbReference type="Proteomes" id="UP000001013">
    <property type="component" value="Chromosome"/>
</dbReference>
<dbReference type="GO" id="GO:0005829">
    <property type="term" value="C:cytosol"/>
    <property type="evidence" value="ECO:0007669"/>
    <property type="project" value="InterPro"/>
</dbReference>
<dbReference type="GO" id="GO:0016920">
    <property type="term" value="F:pyroglutamyl-peptidase activity"/>
    <property type="evidence" value="ECO:0007669"/>
    <property type="project" value="UniProtKB-UniRule"/>
</dbReference>
<dbReference type="GO" id="GO:0006508">
    <property type="term" value="P:proteolysis"/>
    <property type="evidence" value="ECO:0007669"/>
    <property type="project" value="UniProtKB-KW"/>
</dbReference>
<dbReference type="CDD" id="cd00501">
    <property type="entry name" value="Peptidase_C15"/>
    <property type="match status" value="1"/>
</dbReference>
<dbReference type="FunFam" id="3.40.630.20:FF:000001">
    <property type="entry name" value="Pyrrolidone-carboxylate peptidase"/>
    <property type="match status" value="1"/>
</dbReference>
<dbReference type="Gene3D" id="3.40.630.20">
    <property type="entry name" value="Peptidase C15, pyroglutamyl peptidase I-like"/>
    <property type="match status" value="1"/>
</dbReference>
<dbReference type="HAMAP" id="MF_00417">
    <property type="entry name" value="Pyrrolid_peptidase"/>
    <property type="match status" value="1"/>
</dbReference>
<dbReference type="InterPro" id="IPR000816">
    <property type="entry name" value="Peptidase_C15"/>
</dbReference>
<dbReference type="InterPro" id="IPR016125">
    <property type="entry name" value="Peptidase_C15-like"/>
</dbReference>
<dbReference type="InterPro" id="IPR036440">
    <property type="entry name" value="Peptidase_C15-like_sf"/>
</dbReference>
<dbReference type="InterPro" id="IPR029762">
    <property type="entry name" value="PGP-I_bact-type"/>
</dbReference>
<dbReference type="InterPro" id="IPR033694">
    <property type="entry name" value="PGPEP1_Cys_AS"/>
</dbReference>
<dbReference type="InterPro" id="IPR033693">
    <property type="entry name" value="PGPEP1_Glu_AS"/>
</dbReference>
<dbReference type="NCBIfam" id="NF009673">
    <property type="entry name" value="PRK13194.1"/>
    <property type="match status" value="1"/>
</dbReference>
<dbReference type="NCBIfam" id="NF009676">
    <property type="entry name" value="PRK13197.1"/>
    <property type="match status" value="1"/>
</dbReference>
<dbReference type="NCBIfam" id="TIGR00504">
    <property type="entry name" value="pyro_pdase"/>
    <property type="match status" value="1"/>
</dbReference>
<dbReference type="PANTHER" id="PTHR23402">
    <property type="entry name" value="PROTEASE FAMILY C15 PYROGLUTAMYL-PEPTIDASE I-RELATED"/>
    <property type="match status" value="1"/>
</dbReference>
<dbReference type="PANTHER" id="PTHR23402:SF1">
    <property type="entry name" value="PYROGLUTAMYL-PEPTIDASE I"/>
    <property type="match status" value="1"/>
</dbReference>
<dbReference type="Pfam" id="PF01470">
    <property type="entry name" value="Peptidase_C15"/>
    <property type="match status" value="1"/>
</dbReference>
<dbReference type="PIRSF" id="PIRSF015592">
    <property type="entry name" value="Prld-crbxl_pptds"/>
    <property type="match status" value="1"/>
</dbReference>
<dbReference type="PRINTS" id="PR00706">
    <property type="entry name" value="PYROGLUPTASE"/>
</dbReference>
<dbReference type="SUPFAM" id="SSF53182">
    <property type="entry name" value="Pyrrolidone carboxyl peptidase (pyroglutamate aminopeptidase)"/>
    <property type="match status" value="1"/>
</dbReference>
<dbReference type="PROSITE" id="PS01334">
    <property type="entry name" value="PYRASE_CYS"/>
    <property type="match status" value="1"/>
</dbReference>
<dbReference type="PROSITE" id="PS01333">
    <property type="entry name" value="PYRASE_GLU"/>
    <property type="match status" value="1"/>
</dbReference>
<protein>
    <recommendedName>
        <fullName>Pyrrolidone-carboxylate peptidase</fullName>
        <ecNumber>3.4.19.3</ecNumber>
    </recommendedName>
    <alternativeName>
        <fullName>5-oxoprolyl-peptidase</fullName>
    </alternativeName>
    <alternativeName>
        <fullName>Pyroglutamyl-peptidase I</fullName>
        <shortName>PGP-I</shortName>
        <shortName>Pyrase</shortName>
    </alternativeName>
</protein>
<proteinExistence type="evidence at protein level"/>
<keyword id="KW-0002">3D-structure</keyword>
<keyword id="KW-0963">Cytoplasm</keyword>
<keyword id="KW-0903">Direct protein sequencing</keyword>
<keyword id="KW-1015">Disulfide bond</keyword>
<keyword id="KW-0378">Hydrolase</keyword>
<keyword id="KW-0645">Protease</keyword>
<keyword id="KW-1185">Reference proteome</keyword>
<keyword id="KW-0788">Thiol protease</keyword>
<feature type="chain" id="PRO_0000184755" description="Pyrrolidone-carboxylate peptidase">
    <location>
        <begin position="1"/>
        <end position="208"/>
    </location>
</feature>
<feature type="active site">
    <location>
        <position position="79"/>
    </location>
</feature>
<feature type="active site">
    <location>
        <position position="142"/>
    </location>
</feature>
<feature type="active site">
    <location>
        <position position="166"/>
    </location>
</feature>
<feature type="disulfide bond" description="Interchain">
    <location>
        <position position="188"/>
    </location>
</feature>
<feature type="strand" evidence="2">
    <location>
        <begin position="2"/>
        <end position="8"/>
    </location>
</feature>
<feature type="helix" evidence="2">
    <location>
        <begin position="18"/>
        <end position="26"/>
    </location>
</feature>
<feature type="strand" evidence="2">
    <location>
        <begin position="34"/>
        <end position="41"/>
    </location>
</feature>
<feature type="helix" evidence="2">
    <location>
        <begin position="47"/>
        <end position="59"/>
    </location>
</feature>
<feature type="strand" evidence="2">
    <location>
        <begin position="62"/>
        <end position="69"/>
    </location>
</feature>
<feature type="strand" evidence="2">
    <location>
        <begin position="75"/>
        <end position="79"/>
    </location>
</feature>
<feature type="strand" evidence="2">
    <location>
        <begin position="81"/>
        <end position="84"/>
    </location>
</feature>
<feature type="strand" evidence="3">
    <location>
        <begin position="99"/>
        <end position="101"/>
    </location>
</feature>
<feature type="strand" evidence="2">
    <location>
        <begin position="109"/>
        <end position="112"/>
    </location>
</feature>
<feature type="helix" evidence="2">
    <location>
        <begin position="117"/>
        <end position="126"/>
    </location>
</feature>
<feature type="strand" evidence="2">
    <location>
        <begin position="131"/>
        <end position="135"/>
    </location>
</feature>
<feature type="helix" evidence="2">
    <location>
        <begin position="141"/>
        <end position="156"/>
    </location>
</feature>
<feature type="strand" evidence="2">
    <location>
        <begin position="160"/>
        <end position="167"/>
    </location>
</feature>
<feature type="helix" evidence="2">
    <location>
        <begin position="171"/>
        <end position="173"/>
    </location>
</feature>
<feature type="helix" evidence="2">
    <location>
        <begin position="175"/>
        <end position="180"/>
    </location>
</feature>
<feature type="helix" evidence="2">
    <location>
        <begin position="189"/>
        <end position="206"/>
    </location>
</feature>
<organism>
    <name type="scientific">Pyrococcus furiosus (strain ATCC 43587 / DSM 3638 / JCM 8422 / Vc1)</name>
    <dbReference type="NCBI Taxonomy" id="186497"/>
    <lineage>
        <taxon>Archaea</taxon>
        <taxon>Methanobacteriati</taxon>
        <taxon>Methanobacteriota</taxon>
        <taxon>Thermococci</taxon>
        <taxon>Thermococcales</taxon>
        <taxon>Thermococcaceae</taxon>
        <taxon>Pyrococcus</taxon>
    </lineage>
</organism>
<reference key="1">
    <citation type="journal article" date="1998" name="J. Biochem.">
        <title>Pyrrolidone carboxyl peptidase from the hyperthermophilic Archaeon Pyrococcus furiosus: cloning and overexpression in Escherichia coli of the gene, and its application to protein sequence analysis.</title>
        <authorList>
            <person name="Tsunasawa S."/>
            <person name="Nakura S."/>
            <person name="Tanigawa T."/>
            <person name="Kato I."/>
        </authorList>
    </citation>
    <scope>NUCLEOTIDE SEQUENCE [GENOMIC DNA]</scope>
    <scope>PROTEIN SEQUENCE</scope>
</reference>
<reference key="2">
    <citation type="journal article" date="1999" name="Genetics">
        <title>Divergence of the hyperthermophilic archaea Pyrococcus furiosus and P. horikoshii inferred from complete genomic sequences.</title>
        <authorList>
            <person name="Maeder D.L."/>
            <person name="Weiss R.B."/>
            <person name="Dunn D.M."/>
            <person name="Cherry J.L."/>
            <person name="Gonzalez J.M."/>
            <person name="DiRuggiero J."/>
            <person name="Robb F.T."/>
        </authorList>
    </citation>
    <scope>NUCLEOTIDE SEQUENCE [LARGE SCALE GENOMIC DNA]</scope>
    <source>
        <strain>ATCC 43587 / DSM 3638 / JCM 8422 / Vc1</strain>
    </source>
</reference>
<reference key="3">
    <citation type="journal article" date="2001" name="Eur. J. Biochem.">
        <title>Thermal stability of pyrrolidone carboxyl peptidases from the hyperthermophilic Archaeon, Pyrococcus furiosus.</title>
        <authorList>
            <person name="Ogasahara K."/>
            <person name="Khechinashvili N.N."/>
            <person name="Nakamura M."/>
            <person name="Yoshimoto T."/>
            <person name="Yutani K."/>
        </authorList>
    </citation>
    <scope>INTERCHAIN DISULFIDE BOND</scope>
</reference>
<reference key="4">
    <citation type="journal article" date="2001" name="J. Biochem.">
        <title>X-ray crystalline structures of pyrrolidone carboxyl peptidase from a hyperthermophile, Pyrococcus furiosus, and its Cys-free mutant.</title>
        <authorList>
            <person name="Tanaka H."/>
            <person name="Chinami M."/>
            <person name="Mizushima T."/>
            <person name="Ogasahara K."/>
            <person name="Ota M."/>
            <person name="Tsukihara T."/>
            <person name="Yutani K."/>
        </authorList>
    </citation>
    <scope>X-RAY CRYSTALLOGRAPHY (2.2 ANGSTROMS)</scope>
</reference>
<gene>
    <name type="primary">pcp</name>
    <name type="ordered locus">PF1299</name>
</gene>
<sequence>MKVLVTGFEPFGGEKINPTERIAKDLDGIKIGDAQVFGRVLPVVFGKAKEVLEKTLEEIKPDIAIHVGLAPGRSAISIERIAVNAIDARIPDNEGKKIEDEPIVPGAPTAYFSTLPIKKIMKKLHERGIPAYISNSAGLYLCNYVMYLSLHHSATKGYPKMSGFIHVPYIPEQIIDKIGKGQVPPSMCYEMELEAVKVAIEVALEELL</sequence>
<accession>O73944</accession>
<comment type="function">
    <text>Removes 5-oxoproline from various penultimate amino acid residues except L-proline.</text>
</comment>
<comment type="catalytic activity">
    <reaction>
        <text>Release of an N-terminal pyroglutamyl group from a polypeptide, the second amino acid generally not being Pro.</text>
        <dbReference type="EC" id="3.4.19.3"/>
    </reaction>
</comment>
<comment type="subunit">
    <text>Homotetramer made of two disulfide-linked dimers.</text>
</comment>
<comment type="subcellular location">
    <subcellularLocation>
        <location>Cytoplasm</location>
    </subcellularLocation>
</comment>
<comment type="similarity">
    <text evidence="1">Belongs to the peptidase C15 family.</text>
</comment>